<dbReference type="EMBL" id="CP000116">
    <property type="protein sequence ID" value="AAZ96372.1"/>
    <property type="molecule type" value="Genomic_DNA"/>
</dbReference>
<dbReference type="RefSeq" id="WP_011310931.1">
    <property type="nucleotide sequence ID" value="NC_007404.1"/>
</dbReference>
<dbReference type="SMR" id="Q3SLN5"/>
<dbReference type="STRING" id="292415.Tbd_0419"/>
<dbReference type="KEGG" id="tbd:Tbd_0419"/>
<dbReference type="eggNOG" id="COG0096">
    <property type="taxonomic scope" value="Bacteria"/>
</dbReference>
<dbReference type="HOGENOM" id="CLU_098428_0_0_4"/>
<dbReference type="OrthoDB" id="9802617at2"/>
<dbReference type="Proteomes" id="UP000008291">
    <property type="component" value="Chromosome"/>
</dbReference>
<dbReference type="GO" id="GO:1990904">
    <property type="term" value="C:ribonucleoprotein complex"/>
    <property type="evidence" value="ECO:0007669"/>
    <property type="project" value="UniProtKB-KW"/>
</dbReference>
<dbReference type="GO" id="GO:0005840">
    <property type="term" value="C:ribosome"/>
    <property type="evidence" value="ECO:0007669"/>
    <property type="project" value="UniProtKB-KW"/>
</dbReference>
<dbReference type="GO" id="GO:0019843">
    <property type="term" value="F:rRNA binding"/>
    <property type="evidence" value="ECO:0007669"/>
    <property type="project" value="UniProtKB-UniRule"/>
</dbReference>
<dbReference type="GO" id="GO:0003735">
    <property type="term" value="F:structural constituent of ribosome"/>
    <property type="evidence" value="ECO:0007669"/>
    <property type="project" value="InterPro"/>
</dbReference>
<dbReference type="GO" id="GO:0006412">
    <property type="term" value="P:translation"/>
    <property type="evidence" value="ECO:0007669"/>
    <property type="project" value="UniProtKB-UniRule"/>
</dbReference>
<dbReference type="FunFam" id="3.30.1370.30:FF:000003">
    <property type="entry name" value="30S ribosomal protein S8"/>
    <property type="match status" value="1"/>
</dbReference>
<dbReference type="FunFam" id="3.30.1490.10:FF:000001">
    <property type="entry name" value="30S ribosomal protein S8"/>
    <property type="match status" value="1"/>
</dbReference>
<dbReference type="Gene3D" id="3.30.1370.30">
    <property type="match status" value="1"/>
</dbReference>
<dbReference type="Gene3D" id="3.30.1490.10">
    <property type="match status" value="1"/>
</dbReference>
<dbReference type="HAMAP" id="MF_01302_B">
    <property type="entry name" value="Ribosomal_uS8_B"/>
    <property type="match status" value="1"/>
</dbReference>
<dbReference type="InterPro" id="IPR000630">
    <property type="entry name" value="Ribosomal_uS8"/>
</dbReference>
<dbReference type="InterPro" id="IPR047863">
    <property type="entry name" value="Ribosomal_uS8_CS"/>
</dbReference>
<dbReference type="InterPro" id="IPR035987">
    <property type="entry name" value="Ribosomal_uS8_sf"/>
</dbReference>
<dbReference type="NCBIfam" id="NF001109">
    <property type="entry name" value="PRK00136.1"/>
    <property type="match status" value="1"/>
</dbReference>
<dbReference type="PANTHER" id="PTHR11758">
    <property type="entry name" value="40S RIBOSOMAL PROTEIN S15A"/>
    <property type="match status" value="1"/>
</dbReference>
<dbReference type="Pfam" id="PF00410">
    <property type="entry name" value="Ribosomal_S8"/>
    <property type="match status" value="1"/>
</dbReference>
<dbReference type="SUPFAM" id="SSF56047">
    <property type="entry name" value="Ribosomal protein S8"/>
    <property type="match status" value="1"/>
</dbReference>
<dbReference type="PROSITE" id="PS00053">
    <property type="entry name" value="RIBOSOMAL_S8"/>
    <property type="match status" value="1"/>
</dbReference>
<reference key="1">
    <citation type="journal article" date="2006" name="J. Bacteriol.">
        <title>The genome sequence of the obligately chemolithoautotrophic, facultatively anaerobic bacterium Thiobacillus denitrificans.</title>
        <authorList>
            <person name="Beller H.R."/>
            <person name="Chain P.S."/>
            <person name="Letain T.E."/>
            <person name="Chakicherla A."/>
            <person name="Larimer F.W."/>
            <person name="Richardson P.M."/>
            <person name="Coleman M.A."/>
            <person name="Wood A.P."/>
            <person name="Kelly D.P."/>
        </authorList>
    </citation>
    <scope>NUCLEOTIDE SEQUENCE [LARGE SCALE GENOMIC DNA]</scope>
    <source>
        <strain>ATCC 25259 / T1</strain>
    </source>
</reference>
<gene>
    <name evidence="1" type="primary">rpsH</name>
    <name type="ordered locus">Tbd_0419</name>
</gene>
<organism>
    <name type="scientific">Thiobacillus denitrificans (strain ATCC 25259 / T1)</name>
    <dbReference type="NCBI Taxonomy" id="292415"/>
    <lineage>
        <taxon>Bacteria</taxon>
        <taxon>Pseudomonadati</taxon>
        <taxon>Pseudomonadota</taxon>
        <taxon>Betaproteobacteria</taxon>
        <taxon>Nitrosomonadales</taxon>
        <taxon>Thiobacillaceae</taxon>
        <taxon>Thiobacillus</taxon>
    </lineage>
</organism>
<feature type="chain" id="PRO_0000225899" description="Small ribosomal subunit protein uS8">
    <location>
        <begin position="1"/>
        <end position="131"/>
    </location>
</feature>
<accession>Q3SLN5</accession>
<comment type="function">
    <text evidence="1">One of the primary rRNA binding proteins, it binds directly to 16S rRNA central domain where it helps coordinate assembly of the platform of the 30S subunit.</text>
</comment>
<comment type="subunit">
    <text evidence="1">Part of the 30S ribosomal subunit. Contacts proteins S5 and S12.</text>
</comment>
<comment type="similarity">
    <text evidence="1">Belongs to the universal ribosomal protein uS8 family.</text>
</comment>
<proteinExistence type="inferred from homology"/>
<sequence length="131" mass="14157">MSMSDPIADMLTRIRNAQQVEKMAVSMPSSKVKVAIAKVLKDEGYIEDFAVRGEAGKPELELQLKYYAGRPVIEHIERVSKPGLRIYKGAGDLPRVKNGLGVAIVSTSSGVMTDRHARAKGVGGEVLCFVA</sequence>
<protein>
    <recommendedName>
        <fullName evidence="1">Small ribosomal subunit protein uS8</fullName>
    </recommendedName>
    <alternativeName>
        <fullName evidence="2">30S ribosomal protein S8</fullName>
    </alternativeName>
</protein>
<keyword id="KW-1185">Reference proteome</keyword>
<keyword id="KW-0687">Ribonucleoprotein</keyword>
<keyword id="KW-0689">Ribosomal protein</keyword>
<keyword id="KW-0694">RNA-binding</keyword>
<keyword id="KW-0699">rRNA-binding</keyword>
<name>RS8_THIDA</name>
<evidence type="ECO:0000255" key="1">
    <source>
        <dbReference type="HAMAP-Rule" id="MF_01302"/>
    </source>
</evidence>
<evidence type="ECO:0000305" key="2"/>